<gene>
    <name type="primary">CSE2</name>
    <name type="synonym">MED9</name>
    <name type="ordered locus">KLLA0F06314g</name>
</gene>
<protein>
    <recommendedName>
        <fullName>Mediator of RNA polymerase II transcription subunit 9</fullName>
    </recommendedName>
    <alternativeName>
        <fullName>Mediator complex subunit 9</fullName>
    </alternativeName>
</protein>
<proteinExistence type="inferred from homology"/>
<comment type="function">
    <text evidence="1">Component of the Mediator complex, a coactivator involved in the regulated transcription of nearly all RNA polymerase II-dependent genes. Mediator functions as a bridge to convey information from gene-specific regulatory proteins to the basal RNA polymerase II transcription machinery. Mediator is recruited to promoters by direct interactions with regulatory proteins and serves as a scaffold for the assembly of a functional preinitiation complex with RNA polymerase II and the general transcription factors (By similarity).</text>
</comment>
<comment type="subunit">
    <text evidence="1">Component of the Mediator complex.</text>
</comment>
<comment type="subcellular location">
    <subcellularLocation>
        <location evidence="1">Nucleus</location>
    </subcellularLocation>
</comment>
<comment type="similarity">
    <text evidence="3">Belongs to the Mediator complex subunit 9 family.</text>
</comment>
<keyword id="KW-0010">Activator</keyword>
<keyword id="KW-0175">Coiled coil</keyword>
<keyword id="KW-0539">Nucleus</keyword>
<keyword id="KW-1185">Reference proteome</keyword>
<keyword id="KW-0804">Transcription</keyword>
<keyword id="KW-0805">Transcription regulation</keyword>
<organism>
    <name type="scientific">Kluyveromyces lactis (strain ATCC 8585 / CBS 2359 / DSM 70799 / NBRC 1267 / NRRL Y-1140 / WM37)</name>
    <name type="common">Yeast</name>
    <name type="synonym">Candida sphaerica</name>
    <dbReference type="NCBI Taxonomy" id="284590"/>
    <lineage>
        <taxon>Eukaryota</taxon>
        <taxon>Fungi</taxon>
        <taxon>Dikarya</taxon>
        <taxon>Ascomycota</taxon>
        <taxon>Saccharomycotina</taxon>
        <taxon>Saccharomycetes</taxon>
        <taxon>Saccharomycetales</taxon>
        <taxon>Saccharomycetaceae</taxon>
        <taxon>Kluyveromyces</taxon>
    </lineage>
</organism>
<feature type="chain" id="PRO_0000304154" description="Mediator of RNA polymerase II transcription subunit 9">
    <location>
        <begin position="1"/>
        <end position="123"/>
    </location>
</feature>
<feature type="coiled-coil region" evidence="2">
    <location>
        <begin position="95"/>
        <end position="123"/>
    </location>
</feature>
<dbReference type="EMBL" id="CR382126">
    <property type="protein sequence ID" value="CAG98074.1"/>
    <property type="molecule type" value="Genomic_DNA"/>
</dbReference>
<dbReference type="RefSeq" id="XP_455366.1">
    <property type="nucleotide sequence ID" value="XM_455366.1"/>
</dbReference>
<dbReference type="SMR" id="Q6CL23"/>
<dbReference type="FunCoup" id="Q6CL23">
    <property type="interactions" value="151"/>
</dbReference>
<dbReference type="STRING" id="284590.Q6CL23"/>
<dbReference type="PaxDb" id="284590-Q6CL23"/>
<dbReference type="KEGG" id="kla:KLLA0_F06314g"/>
<dbReference type="eggNOG" id="ENOG502S8AG">
    <property type="taxonomic scope" value="Eukaryota"/>
</dbReference>
<dbReference type="HOGENOM" id="CLU_143643_1_0_1"/>
<dbReference type="InParanoid" id="Q6CL23"/>
<dbReference type="OMA" id="PHIFYAL"/>
<dbReference type="Proteomes" id="UP000000598">
    <property type="component" value="Chromosome F"/>
</dbReference>
<dbReference type="GO" id="GO:0016592">
    <property type="term" value="C:mediator complex"/>
    <property type="evidence" value="ECO:0007669"/>
    <property type="project" value="InterPro"/>
</dbReference>
<dbReference type="GO" id="GO:0003712">
    <property type="term" value="F:transcription coregulator activity"/>
    <property type="evidence" value="ECO:0007669"/>
    <property type="project" value="InterPro"/>
</dbReference>
<dbReference type="GO" id="GO:0006357">
    <property type="term" value="P:regulation of transcription by RNA polymerase II"/>
    <property type="evidence" value="ECO:0007669"/>
    <property type="project" value="InterPro"/>
</dbReference>
<dbReference type="InterPro" id="IPR011425">
    <property type="entry name" value="Med9"/>
</dbReference>
<dbReference type="Pfam" id="PF07544">
    <property type="entry name" value="Med9"/>
    <property type="match status" value="1"/>
</dbReference>
<name>MED9_KLULA</name>
<reference key="1">
    <citation type="journal article" date="2004" name="Nature">
        <title>Genome evolution in yeasts.</title>
        <authorList>
            <person name="Dujon B."/>
            <person name="Sherman D."/>
            <person name="Fischer G."/>
            <person name="Durrens P."/>
            <person name="Casaregola S."/>
            <person name="Lafontaine I."/>
            <person name="de Montigny J."/>
            <person name="Marck C."/>
            <person name="Neuveglise C."/>
            <person name="Talla E."/>
            <person name="Goffard N."/>
            <person name="Frangeul L."/>
            <person name="Aigle M."/>
            <person name="Anthouard V."/>
            <person name="Babour A."/>
            <person name="Barbe V."/>
            <person name="Barnay S."/>
            <person name="Blanchin S."/>
            <person name="Beckerich J.-M."/>
            <person name="Beyne E."/>
            <person name="Bleykasten C."/>
            <person name="Boisrame A."/>
            <person name="Boyer J."/>
            <person name="Cattolico L."/>
            <person name="Confanioleri F."/>
            <person name="de Daruvar A."/>
            <person name="Despons L."/>
            <person name="Fabre E."/>
            <person name="Fairhead C."/>
            <person name="Ferry-Dumazet H."/>
            <person name="Groppi A."/>
            <person name="Hantraye F."/>
            <person name="Hennequin C."/>
            <person name="Jauniaux N."/>
            <person name="Joyet P."/>
            <person name="Kachouri R."/>
            <person name="Kerrest A."/>
            <person name="Koszul R."/>
            <person name="Lemaire M."/>
            <person name="Lesur I."/>
            <person name="Ma L."/>
            <person name="Muller H."/>
            <person name="Nicaud J.-M."/>
            <person name="Nikolski M."/>
            <person name="Oztas S."/>
            <person name="Ozier-Kalogeropoulos O."/>
            <person name="Pellenz S."/>
            <person name="Potier S."/>
            <person name="Richard G.-F."/>
            <person name="Straub M.-L."/>
            <person name="Suleau A."/>
            <person name="Swennen D."/>
            <person name="Tekaia F."/>
            <person name="Wesolowski-Louvel M."/>
            <person name="Westhof E."/>
            <person name="Wirth B."/>
            <person name="Zeniou-Meyer M."/>
            <person name="Zivanovic Y."/>
            <person name="Bolotin-Fukuhara M."/>
            <person name="Thierry A."/>
            <person name="Bouchier C."/>
            <person name="Caudron B."/>
            <person name="Scarpelli C."/>
            <person name="Gaillardin C."/>
            <person name="Weissenbach J."/>
            <person name="Wincker P."/>
            <person name="Souciet J.-L."/>
        </authorList>
    </citation>
    <scope>NUCLEOTIDE SEQUENCE [LARGE SCALE GENOMIC DNA]</scope>
    <source>
        <strain>ATCC 8585 / CBS 2359 / DSM 70799 / NBRC 1267 / NRRL Y-1140 / WM37</strain>
    </source>
</reference>
<accession>Q6CL23</accession>
<sequence>MTGDTEKEQEPSSGEQQLNVLKRIHEILTKHSSTQTEFIPLLYHSLKQISKHPNNSSNSLDAATSSIRHRLKTAKTLLQQDPAAIELVSKTPEQWQLHIQEKKIELEKKTKHLQRLRESIQKQ</sequence>
<evidence type="ECO:0000250" key="1"/>
<evidence type="ECO:0000255" key="2"/>
<evidence type="ECO:0000305" key="3"/>